<evidence type="ECO:0000255" key="1">
    <source>
        <dbReference type="HAMAP-Rule" id="MF_01693"/>
    </source>
</evidence>
<protein>
    <recommendedName>
        <fullName evidence="1">8-amino-7-oxononanoate synthase 2</fullName>
        <shortName evidence="1">AONS 2</shortName>
        <ecNumber evidence="1">2.3.1.47</ecNumber>
    </recommendedName>
    <alternativeName>
        <fullName evidence="1">7-keto-8-amino-pelargonic acid synthase 2</fullName>
        <shortName evidence="1">7-KAP synthase 2</shortName>
        <shortName evidence="1">KAPA synthase 2</shortName>
    </alternativeName>
    <alternativeName>
        <fullName evidence="1">8-amino-7-ketopelargonate synthase 2</fullName>
    </alternativeName>
</protein>
<proteinExistence type="inferred from homology"/>
<sequence>MLIDHLNRQQLEREAQGLQRQRRIAESPCAPRQWVSQDGQPAREMLAFCSNDYLGLANHPALVEALAEGARQFGAGSGASHLISGHSRAHAALEGDLAAWLAPSIPNAAALYFCTGYLANLALLTALGDASATIFADKLNHASLIDGALLAKATMQRYAHRNLTVLASQLESCTTPIKLIVTDAVFSMDGDLADLPALLALAERFDAWLIVDDAHGFGVLGDQGRGSLSHFGLRSERLIYMGTLGKAAGLGGAFVAAHPSIIDWLVQAARPYIYTTAAPPAVAHALRESLRLISSAEGEQRRAHLQQLIIQLRTQLSALIGAHPTLGWRLADSSTAIQPLIVGDNAAALALMAALDAQGLWVPAIRPPTVPVGTARLRITLSATHSAADVQRLVDGLACAARELP</sequence>
<organism>
    <name type="scientific">Polaromonas sp. (strain JS666 / ATCC BAA-500)</name>
    <dbReference type="NCBI Taxonomy" id="296591"/>
    <lineage>
        <taxon>Bacteria</taxon>
        <taxon>Pseudomonadati</taxon>
        <taxon>Pseudomonadota</taxon>
        <taxon>Betaproteobacteria</taxon>
        <taxon>Burkholderiales</taxon>
        <taxon>Comamonadaceae</taxon>
        <taxon>Polaromonas</taxon>
    </lineage>
</organism>
<gene>
    <name evidence="1" type="primary">bioF2</name>
    <name type="ordered locus">Bpro_1579</name>
</gene>
<accession>Q12D74</accession>
<dbReference type="EC" id="2.3.1.47" evidence="1"/>
<dbReference type="EMBL" id="CP000316">
    <property type="protein sequence ID" value="ABE43518.1"/>
    <property type="molecule type" value="Genomic_DNA"/>
</dbReference>
<dbReference type="RefSeq" id="WP_011482517.1">
    <property type="nucleotide sequence ID" value="NC_007948.1"/>
</dbReference>
<dbReference type="SMR" id="Q12D74"/>
<dbReference type="STRING" id="296591.Bpro_1579"/>
<dbReference type="KEGG" id="pol:Bpro_1579"/>
<dbReference type="eggNOG" id="COG0156">
    <property type="taxonomic scope" value="Bacteria"/>
</dbReference>
<dbReference type="HOGENOM" id="CLU_015846_11_2_4"/>
<dbReference type="OrthoDB" id="9807157at2"/>
<dbReference type="UniPathway" id="UPA00078"/>
<dbReference type="Proteomes" id="UP000001983">
    <property type="component" value="Chromosome"/>
</dbReference>
<dbReference type="GO" id="GO:0008710">
    <property type="term" value="F:8-amino-7-oxononanoate synthase activity"/>
    <property type="evidence" value="ECO:0007669"/>
    <property type="project" value="UniProtKB-UniRule"/>
</dbReference>
<dbReference type="GO" id="GO:0030170">
    <property type="term" value="F:pyridoxal phosphate binding"/>
    <property type="evidence" value="ECO:0007669"/>
    <property type="project" value="UniProtKB-UniRule"/>
</dbReference>
<dbReference type="GO" id="GO:0009102">
    <property type="term" value="P:biotin biosynthetic process"/>
    <property type="evidence" value="ECO:0007669"/>
    <property type="project" value="UniProtKB-UniRule"/>
</dbReference>
<dbReference type="Gene3D" id="3.90.1150.10">
    <property type="entry name" value="Aspartate Aminotransferase, domain 1"/>
    <property type="match status" value="1"/>
</dbReference>
<dbReference type="Gene3D" id="3.40.640.10">
    <property type="entry name" value="Type I PLP-dependent aspartate aminotransferase-like (Major domain)"/>
    <property type="match status" value="1"/>
</dbReference>
<dbReference type="HAMAP" id="MF_01693">
    <property type="entry name" value="BioF_aminotrans_2"/>
    <property type="match status" value="1"/>
</dbReference>
<dbReference type="InterPro" id="IPR004839">
    <property type="entry name" value="Aminotransferase_I/II_large"/>
</dbReference>
<dbReference type="InterPro" id="IPR050087">
    <property type="entry name" value="AON_synthase_class-II"/>
</dbReference>
<dbReference type="InterPro" id="IPR004723">
    <property type="entry name" value="AONS_Archaea/Proteobacteria"/>
</dbReference>
<dbReference type="InterPro" id="IPR022834">
    <property type="entry name" value="AONS_Proteobacteria"/>
</dbReference>
<dbReference type="InterPro" id="IPR015424">
    <property type="entry name" value="PyrdxlP-dep_Trfase"/>
</dbReference>
<dbReference type="InterPro" id="IPR015421">
    <property type="entry name" value="PyrdxlP-dep_Trfase_major"/>
</dbReference>
<dbReference type="InterPro" id="IPR015422">
    <property type="entry name" value="PyrdxlP-dep_Trfase_small"/>
</dbReference>
<dbReference type="NCBIfam" id="TIGR00858">
    <property type="entry name" value="bioF"/>
    <property type="match status" value="1"/>
</dbReference>
<dbReference type="PANTHER" id="PTHR13693:SF100">
    <property type="entry name" value="8-AMINO-7-OXONONANOATE SYNTHASE"/>
    <property type="match status" value="1"/>
</dbReference>
<dbReference type="PANTHER" id="PTHR13693">
    <property type="entry name" value="CLASS II AMINOTRANSFERASE/8-AMINO-7-OXONONANOATE SYNTHASE"/>
    <property type="match status" value="1"/>
</dbReference>
<dbReference type="Pfam" id="PF00155">
    <property type="entry name" value="Aminotran_1_2"/>
    <property type="match status" value="1"/>
</dbReference>
<dbReference type="SUPFAM" id="SSF53383">
    <property type="entry name" value="PLP-dependent transferases"/>
    <property type="match status" value="1"/>
</dbReference>
<reference key="1">
    <citation type="journal article" date="2008" name="Appl. Environ. Microbiol.">
        <title>The genome of Polaromonas sp. strain JS666: insights into the evolution of a hydrocarbon- and xenobiotic-degrading bacterium, and features of relevance to biotechnology.</title>
        <authorList>
            <person name="Mattes T.E."/>
            <person name="Alexander A.K."/>
            <person name="Richardson P.M."/>
            <person name="Munk A.C."/>
            <person name="Han C.S."/>
            <person name="Stothard P."/>
            <person name="Coleman N.V."/>
        </authorList>
    </citation>
    <scope>NUCLEOTIDE SEQUENCE [LARGE SCALE GENOMIC DNA]</scope>
    <source>
        <strain>JS666 / ATCC BAA-500</strain>
    </source>
</reference>
<comment type="function">
    <text evidence="1">Catalyzes the decarboxylative condensation of pimeloyl-[acyl-carrier protein] and L-alanine to produce 8-amino-7-oxononanoate (AON), [acyl-carrier protein], and carbon dioxide.</text>
</comment>
<comment type="catalytic activity">
    <reaction evidence="1">
        <text>6-carboxyhexanoyl-[ACP] + L-alanine + H(+) = (8S)-8-amino-7-oxononanoate + holo-[ACP] + CO2</text>
        <dbReference type="Rhea" id="RHEA:42288"/>
        <dbReference type="Rhea" id="RHEA-COMP:9685"/>
        <dbReference type="Rhea" id="RHEA-COMP:9955"/>
        <dbReference type="ChEBI" id="CHEBI:15378"/>
        <dbReference type="ChEBI" id="CHEBI:16526"/>
        <dbReference type="ChEBI" id="CHEBI:57972"/>
        <dbReference type="ChEBI" id="CHEBI:64479"/>
        <dbReference type="ChEBI" id="CHEBI:78846"/>
        <dbReference type="ChEBI" id="CHEBI:149468"/>
        <dbReference type="EC" id="2.3.1.47"/>
    </reaction>
</comment>
<comment type="cofactor">
    <cofactor evidence="1">
        <name>pyridoxal 5'-phosphate</name>
        <dbReference type="ChEBI" id="CHEBI:597326"/>
    </cofactor>
</comment>
<comment type="pathway">
    <text evidence="1">Cofactor biosynthesis; biotin biosynthesis.</text>
</comment>
<comment type="subunit">
    <text evidence="1">Homodimer.</text>
</comment>
<comment type="similarity">
    <text evidence="1">Belongs to the class-II pyridoxal-phosphate-dependent aminotransferase family. BioF subfamily.</text>
</comment>
<keyword id="KW-0093">Biotin biosynthesis</keyword>
<keyword id="KW-0663">Pyridoxal phosphate</keyword>
<keyword id="KW-1185">Reference proteome</keyword>
<keyword id="KW-0808">Transferase</keyword>
<name>BIOF2_POLSJ</name>
<feature type="chain" id="PRO_0000381069" description="8-amino-7-oxononanoate synthase 2">
    <location>
        <begin position="1"/>
        <end position="405"/>
    </location>
</feature>
<feature type="binding site" evidence="1">
    <location>
        <position position="20"/>
    </location>
    <ligand>
        <name>substrate</name>
    </ligand>
</feature>
<feature type="binding site" evidence="1">
    <location>
        <begin position="116"/>
        <end position="117"/>
    </location>
    <ligand>
        <name>pyridoxal 5'-phosphate</name>
        <dbReference type="ChEBI" id="CHEBI:597326"/>
    </ligand>
</feature>
<feature type="binding site" evidence="1">
    <location>
        <position position="141"/>
    </location>
    <ligand>
        <name>substrate</name>
    </ligand>
</feature>
<feature type="binding site" evidence="1">
    <location>
        <position position="187"/>
    </location>
    <ligand>
        <name>pyridoxal 5'-phosphate</name>
        <dbReference type="ChEBI" id="CHEBI:597326"/>
    </ligand>
</feature>
<feature type="binding site" evidence="1">
    <location>
        <position position="215"/>
    </location>
    <ligand>
        <name>pyridoxal 5'-phosphate</name>
        <dbReference type="ChEBI" id="CHEBI:597326"/>
    </ligand>
</feature>
<feature type="binding site" evidence="1">
    <location>
        <position position="243"/>
    </location>
    <ligand>
        <name>pyridoxal 5'-phosphate</name>
        <dbReference type="ChEBI" id="CHEBI:597326"/>
    </ligand>
</feature>
<feature type="binding site" evidence="1">
    <location>
        <position position="369"/>
    </location>
    <ligand>
        <name>substrate</name>
    </ligand>
</feature>
<feature type="modified residue" description="N6-(pyridoxal phosphate)lysine" evidence="1">
    <location>
        <position position="246"/>
    </location>
</feature>